<reference key="1">
    <citation type="journal article" date="1991" name="J. Virol.">
        <title>Characterization of a novel human papillomavirus DNA in the cervical carcinoma cell line ME180.</title>
        <authorList>
            <person name="Reuter S."/>
            <person name="Delius H."/>
            <person name="Kahn T."/>
            <person name="Hofmann B."/>
            <person name="zur Hausen H."/>
            <person name="Schwarz E."/>
        </authorList>
    </citation>
    <scope>NUCLEOTIDE SEQUENCE [GENOMIC DNA]</scope>
</reference>
<dbReference type="EMBL" id="M73258">
    <property type="protein sequence ID" value="AAF14012.1"/>
    <property type="molecule type" value="Genomic_DNA"/>
</dbReference>
<dbReference type="PIR" id="D40509">
    <property type="entry name" value="W7WLPR"/>
</dbReference>
<dbReference type="SMR" id="P27963"/>
<dbReference type="GO" id="GO:0030430">
    <property type="term" value="C:host cell cytoplasm"/>
    <property type="evidence" value="ECO:0007669"/>
    <property type="project" value="UniProtKB-SubCell"/>
</dbReference>
<dbReference type="GO" id="GO:0042025">
    <property type="term" value="C:host cell nucleus"/>
    <property type="evidence" value="ECO:0007669"/>
    <property type="project" value="UniProtKB-SubCell"/>
</dbReference>
<dbReference type="GO" id="GO:0003677">
    <property type="term" value="F:DNA binding"/>
    <property type="evidence" value="ECO:0007669"/>
    <property type="project" value="UniProtKB-UniRule"/>
</dbReference>
<dbReference type="GO" id="GO:0003700">
    <property type="term" value="F:DNA-binding transcription factor activity"/>
    <property type="evidence" value="ECO:0007669"/>
    <property type="project" value="UniProtKB-UniRule"/>
</dbReference>
<dbReference type="GO" id="GO:0019904">
    <property type="term" value="F:protein domain specific binding"/>
    <property type="evidence" value="ECO:0007669"/>
    <property type="project" value="UniProtKB-UniRule"/>
</dbReference>
<dbReference type="GO" id="GO:0008270">
    <property type="term" value="F:zinc ion binding"/>
    <property type="evidence" value="ECO:0007669"/>
    <property type="project" value="UniProtKB-KW"/>
</dbReference>
<dbReference type="GO" id="GO:0006351">
    <property type="term" value="P:DNA-templated transcription"/>
    <property type="evidence" value="ECO:0007669"/>
    <property type="project" value="UniProtKB-UniRule"/>
</dbReference>
<dbReference type="GO" id="GO:0039645">
    <property type="term" value="P:symbiont-mediated perturbation of host cell cycle G1/S transition checkpoint"/>
    <property type="evidence" value="ECO:0007669"/>
    <property type="project" value="UniProtKB-UniRule"/>
</dbReference>
<dbReference type="GO" id="GO:0052170">
    <property type="term" value="P:symbiont-mediated suppression of host innate immune response"/>
    <property type="evidence" value="ECO:0007669"/>
    <property type="project" value="UniProtKB-KW"/>
</dbReference>
<dbReference type="GO" id="GO:0039502">
    <property type="term" value="P:symbiont-mediated suppression of host type I interferon-mediated signaling pathway"/>
    <property type="evidence" value="ECO:0007669"/>
    <property type="project" value="UniProtKB-UniRule"/>
</dbReference>
<dbReference type="Gene3D" id="3.30.160.330">
    <property type="match status" value="1"/>
</dbReference>
<dbReference type="HAMAP" id="MF_04004">
    <property type="entry name" value="PPV_E7"/>
    <property type="match status" value="1"/>
</dbReference>
<dbReference type="InterPro" id="IPR000148">
    <property type="entry name" value="Papilloma_E7"/>
</dbReference>
<dbReference type="Pfam" id="PF00527">
    <property type="entry name" value="E7"/>
    <property type="match status" value="1"/>
</dbReference>
<dbReference type="PIRSF" id="PIRSF003407">
    <property type="entry name" value="Papvi_E7"/>
    <property type="match status" value="1"/>
</dbReference>
<dbReference type="SUPFAM" id="SSF161234">
    <property type="entry name" value="E7 C-terminal domain-like"/>
    <property type="match status" value="1"/>
</dbReference>
<proteinExistence type="inferred from homology"/>
<comment type="function">
    <text evidence="1">Plays a role in viral genome replication by driving entry of quiescent cells into the cell cycle. Stimulation of progression from G1 to S phase allows the virus to efficiently use the cellular DNA replicating machinery to achieve viral genome replication. E7 protein has both transforming and trans-activating activities. Induces the disassembly of the E2F1 transcription factor from RB1, with subsequent transcriptional activation of E2F1-regulated S-phase genes. Interferes with host histone deacetylation mediated by HDAC1 and HDAC2, leading to transcription activation. Also plays a role in the inhibition of both antiviral and antiproliferative functions of host interferon alpha. Interaction with host TMEM173/STING impairs the ability of TMEM173/STING to sense cytosolic DNA and promote the production of type I interferon (IFN-alpha and IFN-beta).</text>
</comment>
<comment type="subunit">
    <text evidence="1">Homodimer. Homooligomer. Interacts with host RB1; this interaction induces dissociation of RB1-E2F1 complex thereby disrupting RB1 activity. Interacts with host EP300; this interaction represses EP300 transcriptional activity. Interacts with protein E2; this interaction inhibits E7 oncogenic activity. Interacts with host TMEM173/STING; this interaction impairs the ability of TMEM173/STING to sense cytosolic DNA and promote the production of type I interferon (IFN-alpha and IFN-beta).</text>
</comment>
<comment type="subcellular location">
    <subcellularLocation>
        <location evidence="1">Host cytoplasm</location>
    </subcellularLocation>
    <subcellularLocation>
        <location evidence="1">Host nucleus</location>
    </subcellularLocation>
    <text evidence="1">Predominantly found in the host nucleus.</text>
</comment>
<comment type="domain">
    <text evidence="1">The E7 terminal domain is an intrinsically disordered domain, whose flexibility and conformational transitions confer target adaptability to the oncoprotein. It allows adaptation to a variety of protein targets and exposes the PEST degradation sequence that regulates its turnover in the cell.</text>
</comment>
<comment type="PTM">
    <text evidence="1">Highly phosphorylated.</text>
</comment>
<comment type="similarity">
    <text evidence="1">Belongs to the papillomaviridae E7 protein family.</text>
</comment>
<protein>
    <recommendedName>
        <fullName evidence="1">Protein E7</fullName>
    </recommendedName>
</protein>
<feature type="chain" id="PRO_0000133398" description="Protein E7">
    <location>
        <begin position="1"/>
        <end position="110"/>
    </location>
</feature>
<feature type="zinc finger region" evidence="1">
    <location>
        <begin position="69"/>
        <end position="105"/>
    </location>
</feature>
<feature type="region of interest" description="E7 terminal domain" evidence="1">
    <location>
        <begin position="1"/>
        <end position="47"/>
    </location>
</feature>
<feature type="short sequence motif" description="LXCXE motif; interaction with host RB1 and TMEM173/STING" evidence="1">
    <location>
        <begin position="26"/>
        <end position="30"/>
    </location>
</feature>
<feature type="short sequence motif" description="Nuclear export signal" evidence="1">
    <location>
        <begin position="87"/>
        <end position="95"/>
    </location>
</feature>
<evidence type="ECO:0000255" key="1">
    <source>
        <dbReference type="HAMAP-Rule" id="MF_04004"/>
    </source>
</evidence>
<name>VE7_HPVME</name>
<organism>
    <name type="scientific">Human papillomavirus type ME180</name>
    <dbReference type="NCBI Taxonomy" id="10602"/>
    <lineage>
        <taxon>Viruses</taxon>
        <taxon>Monodnaviria</taxon>
        <taxon>Shotokuvirae</taxon>
        <taxon>Cossaviricota</taxon>
        <taxon>Papovaviricetes</taxon>
        <taxon>Zurhausenvirales</taxon>
        <taxon>Papillomaviridae</taxon>
    </lineage>
</organism>
<accession>P27963</accession>
<gene>
    <name evidence="1" type="primary">E7</name>
</gene>
<sequence>MHGPKPTVQEIVLELCPCNEIEPVDLVCHEQLGDSDDEIDEPDHAVNHHQHQLLARRDEQQRHTIQCTCCKCNNLLQLVVEASRENLRNVELLFMDSLNFVCPWCATETQ</sequence>
<organismHost>
    <name type="scientific">Homo sapiens</name>
    <name type="common">Human</name>
    <dbReference type="NCBI Taxonomy" id="9606"/>
</organismHost>
<keyword id="KW-0010">Activator</keyword>
<keyword id="KW-0238">DNA-binding</keyword>
<keyword id="KW-0244">Early protein</keyword>
<keyword id="KW-1078">G1/S host cell cycle checkpoint dysregulation by virus</keyword>
<keyword id="KW-1035">Host cytoplasm</keyword>
<keyword id="KW-1048">Host nucleus</keyword>
<keyword id="KW-0945">Host-virus interaction</keyword>
<keyword id="KW-1090">Inhibition of host innate immune response by virus</keyword>
<keyword id="KW-1114">Inhibition of host interferon signaling pathway by virus</keyword>
<keyword id="KW-0922">Interferon antiviral system evasion</keyword>
<keyword id="KW-0479">Metal-binding</keyword>
<keyword id="KW-1121">Modulation of host cell cycle by virus</keyword>
<keyword id="KW-0553">Oncogene</keyword>
<keyword id="KW-0804">Transcription</keyword>
<keyword id="KW-0805">Transcription regulation</keyword>
<keyword id="KW-0899">Viral immunoevasion</keyword>
<keyword id="KW-0862">Zinc</keyword>
<keyword id="KW-0863">Zinc-finger</keyword>